<name>UBLH2_SCHPO</name>
<feature type="chain" id="PRO_0000234561" description="Ubiquitin carboxyl-terminal hydrolase 2">
    <location>
        <begin position="1"/>
        <end position="300"/>
    </location>
</feature>
<feature type="domain" description="UCH catalytic" evidence="1">
    <location>
        <begin position="2"/>
        <end position="220"/>
    </location>
</feature>
<feature type="domain" description="ULD" evidence="2">
    <location>
        <begin position="261"/>
        <end position="290"/>
    </location>
</feature>
<feature type="active site" description="Nucleophile" evidence="1">
    <location>
        <position position="83"/>
    </location>
</feature>
<feature type="active site" description="Proton donor" evidence="1">
    <location>
        <position position="159"/>
    </location>
</feature>
<feature type="site" description="Transition state stabilizer" evidence="1">
    <location>
        <position position="77"/>
    </location>
</feature>
<feature type="site" description="Important for enzyme activity" evidence="1">
    <location>
        <position position="174"/>
    </location>
</feature>
<evidence type="ECO:0000255" key="1">
    <source>
        <dbReference type="PROSITE-ProRule" id="PRU01393"/>
    </source>
</evidence>
<evidence type="ECO:0000255" key="2">
    <source>
        <dbReference type="PROSITE-ProRule" id="PRU01394"/>
    </source>
</evidence>
<evidence type="ECO:0000269" key="3">
    <source>
    </source>
</evidence>
<evidence type="ECO:0000269" key="4">
    <source>
    </source>
</evidence>
<evidence type="ECO:0000305" key="5"/>
<sequence length="300" mass="34196">MSWTTIESDAGVFTDLIENLGVKDVEVDELYSLDVDSLRQFPDIYGIIFLFKWNSKVDKPDGTMDYDSMDNIFFAKQVINNACATQALLSVLLNHSDEIDLGTTLSEFKDFSKTLPPELKGEALGNSEHIRCCHNSFARSDPFISEEVRAATDEDEVYHFIAYTNINNVFYELDGLQAAPINHGSCTKEEFAEKAVSVIQARIANYDPAEIRFNLMVICKDKKASLLTREDLTDEEKAASIAVEDEKRLRWKRENQLRRHNFVGLFVELSKLLVKDRIDKNTWNSTLETAKAKYASQKRP</sequence>
<accession>Q9UUB6</accession>
<protein>
    <recommendedName>
        <fullName>Ubiquitin carboxyl-terminal hydrolase 2</fullName>
        <ecNumber>3.4.19.12</ecNumber>
    </recommendedName>
</protein>
<keyword id="KW-0378">Hydrolase</keyword>
<keyword id="KW-0539">Nucleus</keyword>
<keyword id="KW-0645">Protease</keyword>
<keyword id="KW-0647">Proteasome</keyword>
<keyword id="KW-1185">Reference proteome</keyword>
<keyword id="KW-0788">Thiol protease</keyword>
<keyword id="KW-0833">Ubl conjugation pathway</keyword>
<reference key="1">
    <citation type="journal article" date="2002" name="Nature">
        <title>The genome sequence of Schizosaccharomyces pombe.</title>
        <authorList>
            <person name="Wood V."/>
            <person name="Gwilliam R."/>
            <person name="Rajandream M.A."/>
            <person name="Lyne M.H."/>
            <person name="Lyne R."/>
            <person name="Stewart A."/>
            <person name="Sgouros J.G."/>
            <person name="Peat N."/>
            <person name="Hayles J."/>
            <person name="Baker S.G."/>
            <person name="Basham D."/>
            <person name="Bowman S."/>
            <person name="Brooks K."/>
            <person name="Brown D."/>
            <person name="Brown S."/>
            <person name="Chillingworth T."/>
            <person name="Churcher C.M."/>
            <person name="Collins M."/>
            <person name="Connor R."/>
            <person name="Cronin A."/>
            <person name="Davis P."/>
            <person name="Feltwell T."/>
            <person name="Fraser A."/>
            <person name="Gentles S."/>
            <person name="Goble A."/>
            <person name="Hamlin N."/>
            <person name="Harris D.E."/>
            <person name="Hidalgo J."/>
            <person name="Hodgson G."/>
            <person name="Holroyd S."/>
            <person name="Hornsby T."/>
            <person name="Howarth S."/>
            <person name="Huckle E.J."/>
            <person name="Hunt S."/>
            <person name="Jagels K."/>
            <person name="James K.D."/>
            <person name="Jones L."/>
            <person name="Jones M."/>
            <person name="Leather S."/>
            <person name="McDonald S."/>
            <person name="McLean J."/>
            <person name="Mooney P."/>
            <person name="Moule S."/>
            <person name="Mungall K.L."/>
            <person name="Murphy L.D."/>
            <person name="Niblett D."/>
            <person name="Odell C."/>
            <person name="Oliver K."/>
            <person name="O'Neil S."/>
            <person name="Pearson D."/>
            <person name="Quail M.A."/>
            <person name="Rabbinowitsch E."/>
            <person name="Rutherford K.M."/>
            <person name="Rutter S."/>
            <person name="Saunders D."/>
            <person name="Seeger K."/>
            <person name="Sharp S."/>
            <person name="Skelton J."/>
            <person name="Simmonds M.N."/>
            <person name="Squares R."/>
            <person name="Squares S."/>
            <person name="Stevens K."/>
            <person name="Taylor K."/>
            <person name="Taylor R.G."/>
            <person name="Tivey A."/>
            <person name="Walsh S.V."/>
            <person name="Warren T."/>
            <person name="Whitehead S."/>
            <person name="Woodward J.R."/>
            <person name="Volckaert G."/>
            <person name="Aert R."/>
            <person name="Robben J."/>
            <person name="Grymonprez B."/>
            <person name="Weltjens I."/>
            <person name="Vanstreels E."/>
            <person name="Rieger M."/>
            <person name="Schaefer M."/>
            <person name="Mueller-Auer S."/>
            <person name="Gabel C."/>
            <person name="Fuchs M."/>
            <person name="Duesterhoeft A."/>
            <person name="Fritzc C."/>
            <person name="Holzer E."/>
            <person name="Moestl D."/>
            <person name="Hilbert H."/>
            <person name="Borzym K."/>
            <person name="Langer I."/>
            <person name="Beck A."/>
            <person name="Lehrach H."/>
            <person name="Reinhardt R."/>
            <person name="Pohl T.M."/>
            <person name="Eger P."/>
            <person name="Zimmermann W."/>
            <person name="Wedler H."/>
            <person name="Wambutt R."/>
            <person name="Purnelle B."/>
            <person name="Goffeau A."/>
            <person name="Cadieu E."/>
            <person name="Dreano S."/>
            <person name="Gloux S."/>
            <person name="Lelaure V."/>
            <person name="Mottier S."/>
            <person name="Galibert F."/>
            <person name="Aves S.J."/>
            <person name="Xiang Z."/>
            <person name="Hunt C."/>
            <person name="Moore K."/>
            <person name="Hurst S.M."/>
            <person name="Lucas M."/>
            <person name="Rochet M."/>
            <person name="Gaillardin C."/>
            <person name="Tallada V.A."/>
            <person name="Garzon A."/>
            <person name="Thode G."/>
            <person name="Daga R.R."/>
            <person name="Cruzado L."/>
            <person name="Jimenez J."/>
            <person name="Sanchez M."/>
            <person name="del Rey F."/>
            <person name="Benito J."/>
            <person name="Dominguez A."/>
            <person name="Revuelta J.L."/>
            <person name="Moreno S."/>
            <person name="Armstrong J."/>
            <person name="Forsburg S.L."/>
            <person name="Cerutti L."/>
            <person name="Lowe T."/>
            <person name="McCombie W.R."/>
            <person name="Paulsen I."/>
            <person name="Potashkin J."/>
            <person name="Shpakovski G.V."/>
            <person name="Ussery D."/>
            <person name="Barrell B.G."/>
            <person name="Nurse P."/>
        </authorList>
    </citation>
    <scope>NUCLEOTIDE SEQUENCE [LARGE SCALE GENOMIC DNA]</scope>
    <source>
        <strain>972 / ATCC 24843</strain>
    </source>
</reference>
<reference key="2">
    <citation type="journal article" date="2004" name="J. Mol. Biol.">
        <title>Uch2/Uch37 is the major deubiquitinating enzyme associated with the 26S proteasome in fission yeast.</title>
        <authorList>
            <person name="Stone M."/>
            <person name="Hartmann-Petersen R."/>
            <person name="Seeger M."/>
            <person name="Bech-Otschir D."/>
            <person name="Wallace M."/>
            <person name="Gordon C."/>
        </authorList>
    </citation>
    <scope>FUNCTION</scope>
    <scope>INTERACTION WITH RPN10</scope>
    <scope>SUBCELLULAR LOCATION</scope>
</reference>
<reference key="3">
    <citation type="journal article" date="2000" name="Biochem. Biophys. Res. Commun.">
        <title>Identification of a 26S proteasome-associated UCH in fission yeast.</title>
        <authorList>
            <person name="Li T."/>
            <person name="Naqvi N.I."/>
            <person name="Yang H."/>
            <person name="Teo T.S."/>
        </authorList>
    </citation>
    <scope>SUBCELLULAR LOCATION</scope>
</reference>
<comment type="function">
    <text evidence="4">Ubiquitin-protein hydrolase is involved both in the processing of ubiquitin precursors and of ubiquitinated proteins. This enzyme is a thiol protease that recognizes and hydrolyzes a peptide bond at the C-terminal glycine of ubiquitin.</text>
</comment>
<comment type="catalytic activity">
    <reaction>
        <text>Thiol-dependent hydrolysis of ester, thioester, amide, peptide and isopeptide bonds formed by the C-terminal Gly of ubiquitin (a 76-residue protein attached to proteins as an intracellular targeting signal).</text>
        <dbReference type="EC" id="3.4.19.12"/>
    </reaction>
</comment>
<comment type="subunit">
    <text evidence="4">Component of the 26S proteasome. Interacts with rpn10.</text>
</comment>
<comment type="subcellular location">
    <subcellularLocation>
        <location evidence="3 4">Nucleus</location>
    </subcellularLocation>
</comment>
<comment type="similarity">
    <text evidence="5">Belongs to the peptidase C12 family.</text>
</comment>
<gene>
    <name type="primary">uch2</name>
    <name type="ORF">SPBC409.06</name>
</gene>
<organism>
    <name type="scientific">Schizosaccharomyces pombe (strain 972 / ATCC 24843)</name>
    <name type="common">Fission yeast</name>
    <dbReference type="NCBI Taxonomy" id="284812"/>
    <lineage>
        <taxon>Eukaryota</taxon>
        <taxon>Fungi</taxon>
        <taxon>Dikarya</taxon>
        <taxon>Ascomycota</taxon>
        <taxon>Taphrinomycotina</taxon>
        <taxon>Schizosaccharomycetes</taxon>
        <taxon>Schizosaccharomycetales</taxon>
        <taxon>Schizosaccharomycetaceae</taxon>
        <taxon>Schizosaccharomyces</taxon>
    </lineage>
</organism>
<proteinExistence type="evidence at protein level"/>
<dbReference type="EC" id="3.4.19.12"/>
<dbReference type="EMBL" id="CU329671">
    <property type="protein sequence ID" value="CAB52608.1"/>
    <property type="molecule type" value="Genomic_DNA"/>
</dbReference>
<dbReference type="PIR" id="T40434">
    <property type="entry name" value="T40434"/>
</dbReference>
<dbReference type="RefSeq" id="NP_595456.1">
    <property type="nucleotide sequence ID" value="NM_001021366.2"/>
</dbReference>
<dbReference type="SMR" id="Q9UUB6"/>
<dbReference type="BioGRID" id="277472">
    <property type="interactions" value="67"/>
</dbReference>
<dbReference type="ComplexPortal" id="CPX-9077">
    <property type="entry name" value="26S proteasome complex"/>
</dbReference>
<dbReference type="FunCoup" id="Q9UUB6">
    <property type="interactions" value="946"/>
</dbReference>
<dbReference type="IntAct" id="Q9UUB6">
    <property type="interactions" value="1"/>
</dbReference>
<dbReference type="STRING" id="284812.Q9UUB6"/>
<dbReference type="MEROPS" id="C12.009"/>
<dbReference type="iPTMnet" id="Q9UUB6"/>
<dbReference type="PaxDb" id="4896-SPBC409.06.1"/>
<dbReference type="EnsemblFungi" id="SPBC409.06.1">
    <property type="protein sequence ID" value="SPBC409.06.1:pep"/>
    <property type="gene ID" value="SPBC409.06"/>
</dbReference>
<dbReference type="GeneID" id="2540956"/>
<dbReference type="KEGG" id="spo:2540956"/>
<dbReference type="PomBase" id="SPBC409.06">
    <property type="gene designation" value="uch2"/>
</dbReference>
<dbReference type="VEuPathDB" id="FungiDB:SPBC409.06"/>
<dbReference type="eggNOG" id="KOG2778">
    <property type="taxonomic scope" value="Eukaryota"/>
</dbReference>
<dbReference type="HOGENOM" id="CLU_018316_1_0_1"/>
<dbReference type="InParanoid" id="Q9UUB6"/>
<dbReference type="OMA" id="YIQYEIQ"/>
<dbReference type="PhylomeDB" id="Q9UUB6"/>
<dbReference type="Reactome" id="R-SPO-5689603">
    <property type="pathway name" value="UCH proteinases"/>
</dbReference>
<dbReference type="PRO" id="PR:Q9UUB6"/>
<dbReference type="Proteomes" id="UP000002485">
    <property type="component" value="Chromosome II"/>
</dbReference>
<dbReference type="GO" id="GO:0005737">
    <property type="term" value="C:cytoplasm"/>
    <property type="evidence" value="ECO:0000318"/>
    <property type="project" value="GO_Central"/>
</dbReference>
<dbReference type="GO" id="GO:0034399">
    <property type="term" value="C:nuclear periphery"/>
    <property type="evidence" value="ECO:0007005"/>
    <property type="project" value="PomBase"/>
</dbReference>
<dbReference type="GO" id="GO:0005634">
    <property type="term" value="C:nucleus"/>
    <property type="evidence" value="ECO:0007005"/>
    <property type="project" value="PomBase"/>
</dbReference>
<dbReference type="GO" id="GO:0000502">
    <property type="term" value="C:proteasome complex"/>
    <property type="evidence" value="ECO:0007005"/>
    <property type="project" value="PomBase"/>
</dbReference>
<dbReference type="GO" id="GO:0004843">
    <property type="term" value="F:cysteine-type deubiquitinase activity"/>
    <property type="evidence" value="ECO:0000316"/>
    <property type="project" value="PomBase"/>
</dbReference>
<dbReference type="GO" id="GO:0019784">
    <property type="term" value="F:deNEDDylase activity"/>
    <property type="evidence" value="ECO:0000314"/>
    <property type="project" value="PomBase"/>
</dbReference>
<dbReference type="GO" id="GO:0140492">
    <property type="term" value="F:metal-dependent deubiquitinase activity"/>
    <property type="evidence" value="ECO:0007005"/>
    <property type="project" value="PomBase"/>
</dbReference>
<dbReference type="GO" id="GO:0071629">
    <property type="term" value="P:cytoplasm protein quality control by the ubiquitin-proteasome system"/>
    <property type="evidence" value="ECO:0000316"/>
    <property type="project" value="PomBase"/>
</dbReference>
<dbReference type="GO" id="GO:0000338">
    <property type="term" value="P:protein deneddylation"/>
    <property type="evidence" value="ECO:0000314"/>
    <property type="project" value="PomBase"/>
</dbReference>
<dbReference type="GO" id="GO:0016579">
    <property type="term" value="P:protein deubiquitination"/>
    <property type="evidence" value="ECO:0007669"/>
    <property type="project" value="InterPro"/>
</dbReference>
<dbReference type="CDD" id="cd09617">
    <property type="entry name" value="Peptidase_C12_UCH37_BAP1"/>
    <property type="match status" value="1"/>
</dbReference>
<dbReference type="FunFam" id="3.40.532.10:FF:000003">
    <property type="entry name" value="Ubiquitin carboxyl-terminal hydrolase"/>
    <property type="match status" value="1"/>
</dbReference>
<dbReference type="Gene3D" id="1.20.58.860">
    <property type="match status" value="1"/>
</dbReference>
<dbReference type="Gene3D" id="3.40.532.10">
    <property type="entry name" value="Peptidase C12, ubiquitin carboxyl-terminal hydrolase"/>
    <property type="match status" value="1"/>
</dbReference>
<dbReference type="InterPro" id="IPR038765">
    <property type="entry name" value="Papain-like_cys_pep_sf"/>
</dbReference>
<dbReference type="InterPro" id="IPR001578">
    <property type="entry name" value="Peptidase_C12_UCH"/>
</dbReference>
<dbReference type="InterPro" id="IPR036959">
    <property type="entry name" value="Peptidase_C12_UCH_sf"/>
</dbReference>
<dbReference type="InterPro" id="IPR017390">
    <property type="entry name" value="Ubiquitinyl_hydrolase_UCH37"/>
</dbReference>
<dbReference type="InterPro" id="IPR041507">
    <property type="entry name" value="UCH_C"/>
</dbReference>
<dbReference type="PANTHER" id="PTHR10589">
    <property type="entry name" value="UBIQUITIN CARBOXYL-TERMINAL HYDROLASE"/>
    <property type="match status" value="1"/>
</dbReference>
<dbReference type="PANTHER" id="PTHR10589:SF16">
    <property type="entry name" value="UBIQUITIN CARBOXYL-TERMINAL HYDROLASE ISOZYME L5"/>
    <property type="match status" value="1"/>
</dbReference>
<dbReference type="Pfam" id="PF01088">
    <property type="entry name" value="Peptidase_C12"/>
    <property type="match status" value="1"/>
</dbReference>
<dbReference type="Pfam" id="PF18031">
    <property type="entry name" value="UCH_C"/>
    <property type="match status" value="1"/>
</dbReference>
<dbReference type="PIRSF" id="PIRSF038120">
    <property type="entry name" value="Ubiquitinyl_hydrolase_UCH37"/>
    <property type="match status" value="1"/>
</dbReference>
<dbReference type="PRINTS" id="PR00707">
    <property type="entry name" value="UBCTHYDRLASE"/>
</dbReference>
<dbReference type="SUPFAM" id="SSF54001">
    <property type="entry name" value="Cysteine proteinases"/>
    <property type="match status" value="1"/>
</dbReference>
<dbReference type="PROSITE" id="PS52048">
    <property type="entry name" value="UCH_DOMAIN"/>
    <property type="match status" value="1"/>
</dbReference>
<dbReference type="PROSITE" id="PS52049">
    <property type="entry name" value="ULD"/>
    <property type="match status" value="1"/>
</dbReference>